<feature type="chain" id="PRO_0000286276" description="Spermidine/putrescine import ATP-binding protein PotA">
    <location>
        <begin position="1"/>
        <end position="361"/>
    </location>
</feature>
<feature type="domain" description="ABC transporter" evidence="1">
    <location>
        <begin position="7"/>
        <end position="241"/>
    </location>
</feature>
<feature type="binding site" evidence="1">
    <location>
        <begin position="43"/>
        <end position="50"/>
    </location>
    <ligand>
        <name>ATP</name>
        <dbReference type="ChEBI" id="CHEBI:30616"/>
    </ligand>
</feature>
<keyword id="KW-0067">ATP-binding</keyword>
<keyword id="KW-0997">Cell inner membrane</keyword>
<keyword id="KW-1003">Cell membrane</keyword>
<keyword id="KW-0472">Membrane</keyword>
<keyword id="KW-0547">Nucleotide-binding</keyword>
<keyword id="KW-1278">Translocase</keyword>
<keyword id="KW-0813">Transport</keyword>
<dbReference type="EC" id="7.6.2.11" evidence="1"/>
<dbReference type="EMBL" id="CP000094">
    <property type="protein sequence ID" value="ABA74880.1"/>
    <property type="molecule type" value="Genomic_DNA"/>
</dbReference>
<dbReference type="RefSeq" id="WP_011334526.1">
    <property type="nucleotide sequence ID" value="NC_007492.2"/>
</dbReference>
<dbReference type="SMR" id="Q3KBH4"/>
<dbReference type="KEGG" id="pfo:Pfl01_3142"/>
<dbReference type="eggNOG" id="COG3842">
    <property type="taxonomic scope" value="Bacteria"/>
</dbReference>
<dbReference type="HOGENOM" id="CLU_000604_1_1_6"/>
<dbReference type="Proteomes" id="UP000002704">
    <property type="component" value="Chromosome"/>
</dbReference>
<dbReference type="GO" id="GO:0043190">
    <property type="term" value="C:ATP-binding cassette (ABC) transporter complex"/>
    <property type="evidence" value="ECO:0007669"/>
    <property type="project" value="InterPro"/>
</dbReference>
<dbReference type="GO" id="GO:0015594">
    <property type="term" value="F:ABC-type putrescine transporter activity"/>
    <property type="evidence" value="ECO:0007669"/>
    <property type="project" value="InterPro"/>
</dbReference>
<dbReference type="GO" id="GO:0005524">
    <property type="term" value="F:ATP binding"/>
    <property type="evidence" value="ECO:0007669"/>
    <property type="project" value="UniProtKB-KW"/>
</dbReference>
<dbReference type="GO" id="GO:0016887">
    <property type="term" value="F:ATP hydrolysis activity"/>
    <property type="evidence" value="ECO:0007669"/>
    <property type="project" value="InterPro"/>
</dbReference>
<dbReference type="CDD" id="cd03300">
    <property type="entry name" value="ABC_PotA_N"/>
    <property type="match status" value="1"/>
</dbReference>
<dbReference type="FunFam" id="3.40.50.300:FF:000133">
    <property type="entry name" value="Spermidine/putrescine import ATP-binding protein PotA"/>
    <property type="match status" value="1"/>
</dbReference>
<dbReference type="Gene3D" id="2.40.50.100">
    <property type="match status" value="1"/>
</dbReference>
<dbReference type="Gene3D" id="3.40.50.300">
    <property type="entry name" value="P-loop containing nucleotide triphosphate hydrolases"/>
    <property type="match status" value="1"/>
</dbReference>
<dbReference type="InterPro" id="IPR003593">
    <property type="entry name" value="AAA+_ATPase"/>
</dbReference>
<dbReference type="InterPro" id="IPR050093">
    <property type="entry name" value="ABC_SmlMolc_Importer"/>
</dbReference>
<dbReference type="InterPro" id="IPR003439">
    <property type="entry name" value="ABC_transporter-like_ATP-bd"/>
</dbReference>
<dbReference type="InterPro" id="IPR017871">
    <property type="entry name" value="ABC_transporter-like_CS"/>
</dbReference>
<dbReference type="InterPro" id="IPR008995">
    <property type="entry name" value="Mo/tungstate-bd_C_term_dom"/>
</dbReference>
<dbReference type="InterPro" id="IPR027417">
    <property type="entry name" value="P-loop_NTPase"/>
</dbReference>
<dbReference type="InterPro" id="IPR005893">
    <property type="entry name" value="PotA-like"/>
</dbReference>
<dbReference type="InterPro" id="IPR017879">
    <property type="entry name" value="PotA_ATP-bd"/>
</dbReference>
<dbReference type="InterPro" id="IPR013611">
    <property type="entry name" value="Transp-assoc_OB_typ2"/>
</dbReference>
<dbReference type="NCBIfam" id="TIGR01187">
    <property type="entry name" value="potA"/>
    <property type="match status" value="1"/>
</dbReference>
<dbReference type="PANTHER" id="PTHR42781">
    <property type="entry name" value="SPERMIDINE/PUTRESCINE IMPORT ATP-BINDING PROTEIN POTA"/>
    <property type="match status" value="1"/>
</dbReference>
<dbReference type="PANTHER" id="PTHR42781:SF4">
    <property type="entry name" value="SPERMIDINE_PUTRESCINE IMPORT ATP-BINDING PROTEIN POTA"/>
    <property type="match status" value="1"/>
</dbReference>
<dbReference type="Pfam" id="PF00005">
    <property type="entry name" value="ABC_tran"/>
    <property type="match status" value="1"/>
</dbReference>
<dbReference type="Pfam" id="PF08402">
    <property type="entry name" value="TOBE_2"/>
    <property type="match status" value="1"/>
</dbReference>
<dbReference type="SMART" id="SM00382">
    <property type="entry name" value="AAA"/>
    <property type="match status" value="1"/>
</dbReference>
<dbReference type="SUPFAM" id="SSF50331">
    <property type="entry name" value="MOP-like"/>
    <property type="match status" value="1"/>
</dbReference>
<dbReference type="SUPFAM" id="SSF52540">
    <property type="entry name" value="P-loop containing nucleoside triphosphate hydrolases"/>
    <property type="match status" value="1"/>
</dbReference>
<dbReference type="PROSITE" id="PS00211">
    <property type="entry name" value="ABC_TRANSPORTER_1"/>
    <property type="match status" value="1"/>
</dbReference>
<dbReference type="PROSITE" id="PS50893">
    <property type="entry name" value="ABC_TRANSPORTER_2"/>
    <property type="match status" value="1"/>
</dbReference>
<dbReference type="PROSITE" id="PS51305">
    <property type="entry name" value="POTA"/>
    <property type="match status" value="1"/>
</dbReference>
<accession>Q3KBH4</accession>
<reference key="1">
    <citation type="journal article" date="2009" name="Genome Biol.">
        <title>Genomic and genetic analyses of diversity and plant interactions of Pseudomonas fluorescens.</title>
        <authorList>
            <person name="Silby M.W."/>
            <person name="Cerdeno-Tarraga A.M."/>
            <person name="Vernikos G.S."/>
            <person name="Giddens S.R."/>
            <person name="Jackson R.W."/>
            <person name="Preston G.M."/>
            <person name="Zhang X.-X."/>
            <person name="Moon C.D."/>
            <person name="Gehrig S.M."/>
            <person name="Godfrey S.A.C."/>
            <person name="Knight C.G."/>
            <person name="Malone J.G."/>
            <person name="Robinson Z."/>
            <person name="Spiers A.J."/>
            <person name="Harris S."/>
            <person name="Challis G.L."/>
            <person name="Yaxley A.M."/>
            <person name="Harris D."/>
            <person name="Seeger K."/>
            <person name="Murphy L."/>
            <person name="Rutter S."/>
            <person name="Squares R."/>
            <person name="Quail M.A."/>
            <person name="Saunders E."/>
            <person name="Mavromatis K."/>
            <person name="Brettin T.S."/>
            <person name="Bentley S.D."/>
            <person name="Hothersall J."/>
            <person name="Stephens E."/>
            <person name="Thomas C.M."/>
            <person name="Parkhill J."/>
            <person name="Levy S.B."/>
            <person name="Rainey P.B."/>
            <person name="Thomson N.R."/>
        </authorList>
    </citation>
    <scope>NUCLEOTIDE SEQUENCE [LARGE SCALE GENOMIC DNA]</scope>
    <source>
        <strain>Pf0-1</strain>
    </source>
</reference>
<organism>
    <name type="scientific">Pseudomonas fluorescens (strain Pf0-1)</name>
    <dbReference type="NCBI Taxonomy" id="205922"/>
    <lineage>
        <taxon>Bacteria</taxon>
        <taxon>Pseudomonadati</taxon>
        <taxon>Pseudomonadota</taxon>
        <taxon>Gammaproteobacteria</taxon>
        <taxon>Pseudomonadales</taxon>
        <taxon>Pseudomonadaceae</taxon>
        <taxon>Pseudomonas</taxon>
    </lineage>
</organism>
<protein>
    <recommendedName>
        <fullName evidence="1">Spermidine/putrescine import ATP-binding protein PotA</fullName>
        <ecNumber evidence="1">7.6.2.11</ecNumber>
    </recommendedName>
</protein>
<sequence length="361" mass="39726">MGQPIAIEVRNVSKRYSDDPGLAPALDNVSVNIADNEFFTLLGPSGCGKTTLLRAIAGFEHVSDGEIRLAGETVNHLPPFKRRVNTVFQSYALFPHMSVAQNIAFGLEMQGLDRKTIPGRVDEMLALVQMEHLAGRKPAQLSGGQQQRVALARALAPKPKVLLLDEPLSALDLKLRKEMQVELKRVQQEAGITFIFVTHDQEEALTLSDRIAVMSAGKILQIGTPIDIYERPQHRFVAQFIGDINFLPGQLKRGEHNENIFVPNGMPVEIPCPPQGVNGSSVQLAFRPERSQLVAADQPHHLRGVIEAVLYVGTATLYQCRLNNDIKVMLRENNEGLNRGRAVGEPVAVHLPPQACLLMEA</sequence>
<gene>
    <name evidence="1" type="primary">potA</name>
    <name type="ordered locus">Pfl01_3142</name>
</gene>
<comment type="function">
    <text evidence="1">Part of the ABC transporter complex PotABCD involved in spermidine/putrescine import. Responsible for energy coupling to the transport system.</text>
</comment>
<comment type="catalytic activity">
    <reaction evidence="1">
        <text>ATP + H2O + polyamine-[polyamine-binding protein]Side 1 = ADP + phosphate + polyamineSide 2 + [polyamine-binding protein]Side 1.</text>
        <dbReference type="EC" id="7.6.2.11"/>
    </reaction>
</comment>
<comment type="subunit">
    <text evidence="1">The complex is composed of two ATP-binding proteins (PotA), two transmembrane proteins (PotB and PotC) and a solute-binding protein (PotD).</text>
</comment>
<comment type="subcellular location">
    <subcellularLocation>
        <location evidence="1">Cell inner membrane</location>
        <topology evidence="1">Peripheral membrane protein</topology>
    </subcellularLocation>
</comment>
<comment type="similarity">
    <text evidence="1">Belongs to the ABC transporter superfamily. Spermidine/putrescine importer (TC 3.A.1.11.1) family.</text>
</comment>
<evidence type="ECO:0000255" key="1">
    <source>
        <dbReference type="HAMAP-Rule" id="MF_01726"/>
    </source>
</evidence>
<name>POTA_PSEPF</name>
<proteinExistence type="inferred from homology"/>